<proteinExistence type="inferred from homology"/>
<protein>
    <recommendedName>
        <fullName evidence="1">Bis(5'-nucleosyl)-tetraphosphatase, symmetrical</fullName>
        <ecNumber evidence="1">3.6.1.41</ecNumber>
    </recommendedName>
    <alternativeName>
        <fullName evidence="1">Ap4A hydrolase</fullName>
    </alternativeName>
    <alternativeName>
        <fullName evidence="1">Diadenosine 5',5'''-P1,P4-tetraphosphate pyrophosphohydrolase</fullName>
    </alternativeName>
    <alternativeName>
        <fullName evidence="1">Diadenosine tetraphosphatase</fullName>
    </alternativeName>
</protein>
<feature type="chain" id="PRO_1000099321" description="Bis(5'-nucleosyl)-tetraphosphatase, symmetrical">
    <location>
        <begin position="1"/>
        <end position="281"/>
    </location>
</feature>
<organism>
    <name type="scientific">Delftia acidovorans (strain DSM 14801 / SPH-1)</name>
    <dbReference type="NCBI Taxonomy" id="398578"/>
    <lineage>
        <taxon>Bacteria</taxon>
        <taxon>Pseudomonadati</taxon>
        <taxon>Pseudomonadota</taxon>
        <taxon>Betaproteobacteria</taxon>
        <taxon>Burkholderiales</taxon>
        <taxon>Comamonadaceae</taxon>
        <taxon>Delftia</taxon>
    </lineage>
</organism>
<gene>
    <name evidence="1" type="primary">apaH</name>
    <name type="ordered locus">Daci_2156</name>
</gene>
<reference key="1">
    <citation type="submission" date="2007-11" db="EMBL/GenBank/DDBJ databases">
        <title>Complete sequence of Delftia acidovorans DSM 14801 / SPH-1.</title>
        <authorList>
            <person name="Copeland A."/>
            <person name="Lucas S."/>
            <person name="Lapidus A."/>
            <person name="Barry K."/>
            <person name="Glavina del Rio T."/>
            <person name="Dalin E."/>
            <person name="Tice H."/>
            <person name="Pitluck S."/>
            <person name="Lowry S."/>
            <person name="Clum A."/>
            <person name="Schmutz J."/>
            <person name="Larimer F."/>
            <person name="Land M."/>
            <person name="Hauser L."/>
            <person name="Kyrpides N."/>
            <person name="Kim E."/>
            <person name="Schleheck D."/>
            <person name="Richardson P."/>
        </authorList>
    </citation>
    <scope>NUCLEOTIDE SEQUENCE [LARGE SCALE GENOMIC DNA]</scope>
    <source>
        <strain>DSM 14801 / SPH-1</strain>
    </source>
</reference>
<sequence length="281" mass="31172">MALYCIGDIQGCHDAFERLLHRVDFSASRDTLYILGDLVNRGPESDKVLRTCMAAGDSMRALLGNHDLHLLAAAQGVRRSSRRDTLARVLDAPDRDQLLDWLRHQPLARSHRMAHGEELLMVHAGVLPQWSSQEVMALAGEVHSVLRSKQLPDFLQAMYGNQPDRWSPDLQGWERLRVIVNALTRLRFCTAQGVMDFDSTESAEQAAPGLMPWFDVPGRATASATIAFGHWSTLGHISRPDLVALDTGCVWGGCLSMMRFGDHLADRELIQVDCPQAQAPG</sequence>
<comment type="function">
    <text evidence="1">Hydrolyzes diadenosine 5',5'''-P1,P4-tetraphosphate to yield ADP.</text>
</comment>
<comment type="catalytic activity">
    <reaction evidence="1">
        <text>P(1),P(4)-bis(5'-adenosyl) tetraphosphate + H2O = 2 ADP + 2 H(+)</text>
        <dbReference type="Rhea" id="RHEA:24252"/>
        <dbReference type="ChEBI" id="CHEBI:15377"/>
        <dbReference type="ChEBI" id="CHEBI:15378"/>
        <dbReference type="ChEBI" id="CHEBI:58141"/>
        <dbReference type="ChEBI" id="CHEBI:456216"/>
        <dbReference type="EC" id="3.6.1.41"/>
    </reaction>
</comment>
<comment type="similarity">
    <text evidence="1">Belongs to the Ap4A hydrolase family.</text>
</comment>
<keyword id="KW-0378">Hydrolase</keyword>
<keyword id="KW-1185">Reference proteome</keyword>
<accession>A9BVD2</accession>
<evidence type="ECO:0000255" key="1">
    <source>
        <dbReference type="HAMAP-Rule" id="MF_00199"/>
    </source>
</evidence>
<dbReference type="EC" id="3.6.1.41" evidence="1"/>
<dbReference type="EMBL" id="CP000884">
    <property type="protein sequence ID" value="ABX34796.1"/>
    <property type="molecule type" value="Genomic_DNA"/>
</dbReference>
<dbReference type="RefSeq" id="WP_012204079.1">
    <property type="nucleotide sequence ID" value="NC_010002.1"/>
</dbReference>
<dbReference type="SMR" id="A9BVD2"/>
<dbReference type="STRING" id="398578.Daci_2156"/>
<dbReference type="GeneID" id="24114601"/>
<dbReference type="KEGG" id="dac:Daci_2156"/>
<dbReference type="eggNOG" id="COG0639">
    <property type="taxonomic scope" value="Bacteria"/>
</dbReference>
<dbReference type="HOGENOM" id="CLU_056184_1_0_4"/>
<dbReference type="Proteomes" id="UP000000784">
    <property type="component" value="Chromosome"/>
</dbReference>
<dbReference type="GO" id="GO:0008803">
    <property type="term" value="F:bis(5'-nucleosyl)-tetraphosphatase (symmetrical) activity"/>
    <property type="evidence" value="ECO:0007669"/>
    <property type="project" value="UniProtKB-UniRule"/>
</dbReference>
<dbReference type="CDD" id="cd07422">
    <property type="entry name" value="MPP_ApaH"/>
    <property type="match status" value="1"/>
</dbReference>
<dbReference type="Gene3D" id="3.60.21.10">
    <property type="match status" value="1"/>
</dbReference>
<dbReference type="HAMAP" id="MF_00199">
    <property type="entry name" value="ApaH"/>
    <property type="match status" value="1"/>
</dbReference>
<dbReference type="InterPro" id="IPR004617">
    <property type="entry name" value="ApaH"/>
</dbReference>
<dbReference type="InterPro" id="IPR004843">
    <property type="entry name" value="Calcineurin-like_PHP_ApaH"/>
</dbReference>
<dbReference type="InterPro" id="IPR029052">
    <property type="entry name" value="Metallo-depent_PP-like"/>
</dbReference>
<dbReference type="NCBIfam" id="TIGR00668">
    <property type="entry name" value="apaH"/>
    <property type="match status" value="1"/>
</dbReference>
<dbReference type="NCBIfam" id="NF001204">
    <property type="entry name" value="PRK00166.1"/>
    <property type="match status" value="1"/>
</dbReference>
<dbReference type="PANTHER" id="PTHR40942">
    <property type="match status" value="1"/>
</dbReference>
<dbReference type="PANTHER" id="PTHR40942:SF4">
    <property type="entry name" value="CYTOCHROME C5"/>
    <property type="match status" value="1"/>
</dbReference>
<dbReference type="Pfam" id="PF00149">
    <property type="entry name" value="Metallophos"/>
    <property type="match status" value="1"/>
</dbReference>
<dbReference type="PIRSF" id="PIRSF000903">
    <property type="entry name" value="B5n-ttraPtase_sm"/>
    <property type="match status" value="1"/>
</dbReference>
<dbReference type="SUPFAM" id="SSF56300">
    <property type="entry name" value="Metallo-dependent phosphatases"/>
    <property type="match status" value="1"/>
</dbReference>
<name>APAH_DELAS</name>